<keyword id="KW-0028">Amino-acid biosynthesis</keyword>
<keyword id="KW-0055">Arginine biosynthesis</keyword>
<keyword id="KW-0963">Cytoplasm</keyword>
<keyword id="KW-0521">NADP</keyword>
<keyword id="KW-0560">Oxidoreductase</keyword>
<keyword id="KW-1185">Reference proteome</keyword>
<name>ARGC_NITMU</name>
<feature type="chain" id="PRO_1000011025" description="N-acetyl-gamma-glutamyl-phosphate reductase">
    <location>
        <begin position="1"/>
        <end position="342"/>
    </location>
</feature>
<feature type="active site" evidence="1">
    <location>
        <position position="149"/>
    </location>
</feature>
<proteinExistence type="inferred from homology"/>
<sequence>MLKIGIVGGTGYTGVELLRILSQHPEVNIEAITSRKEAGMDVAQLFPSLRGRIELKFSDPAEANLEKCDVVFFATPNGIAMKQVPSLLDAGVRIIDLAADFRIKDIAVWEKWYGMPHACPELVAEAVYGLPEINRDRIKTARLIANPGCYPTAVQLGFLPLVESGAADLDHLVADAKSGVSGAGRNAEIHTLFAEAADNFKAYGVSGHRHLPEIRQGLSQAAKHPVGLTFVPHLTPMIRGIHATLYVKLLKEVDLQALYENRYVNEPFVDVLPAGSHPETRSVRGSNLCRIAVHRPQGGDTAVILSVTDNLVKGAAGQAVQNMNLMFGLPETLAITHLPLFP</sequence>
<comment type="function">
    <text evidence="1">Catalyzes the NADPH-dependent reduction of N-acetyl-5-glutamyl phosphate to yield N-acetyl-L-glutamate 5-semialdehyde.</text>
</comment>
<comment type="catalytic activity">
    <reaction evidence="1">
        <text>N-acetyl-L-glutamate 5-semialdehyde + phosphate + NADP(+) = N-acetyl-L-glutamyl 5-phosphate + NADPH + H(+)</text>
        <dbReference type="Rhea" id="RHEA:21588"/>
        <dbReference type="ChEBI" id="CHEBI:15378"/>
        <dbReference type="ChEBI" id="CHEBI:29123"/>
        <dbReference type="ChEBI" id="CHEBI:43474"/>
        <dbReference type="ChEBI" id="CHEBI:57783"/>
        <dbReference type="ChEBI" id="CHEBI:57936"/>
        <dbReference type="ChEBI" id="CHEBI:58349"/>
        <dbReference type="EC" id="1.2.1.38"/>
    </reaction>
</comment>
<comment type="pathway">
    <text evidence="1">Amino-acid biosynthesis; L-arginine biosynthesis; N(2)-acetyl-L-ornithine from L-glutamate: step 3/4.</text>
</comment>
<comment type="subcellular location">
    <subcellularLocation>
        <location evidence="1">Cytoplasm</location>
    </subcellularLocation>
</comment>
<comment type="similarity">
    <text evidence="1">Belongs to the NAGSA dehydrogenase family. Type 1 subfamily.</text>
</comment>
<organism>
    <name type="scientific">Nitrosospira multiformis (strain ATCC 25196 / NCIMB 11849 / C 71)</name>
    <dbReference type="NCBI Taxonomy" id="323848"/>
    <lineage>
        <taxon>Bacteria</taxon>
        <taxon>Pseudomonadati</taxon>
        <taxon>Pseudomonadota</taxon>
        <taxon>Betaproteobacteria</taxon>
        <taxon>Nitrosomonadales</taxon>
        <taxon>Nitrosomonadaceae</taxon>
        <taxon>Nitrosospira</taxon>
    </lineage>
</organism>
<gene>
    <name evidence="1" type="primary">argC</name>
    <name type="ordered locus">Nmul_A0559</name>
</gene>
<evidence type="ECO:0000255" key="1">
    <source>
        <dbReference type="HAMAP-Rule" id="MF_00150"/>
    </source>
</evidence>
<protein>
    <recommendedName>
        <fullName evidence="1">N-acetyl-gamma-glutamyl-phosphate reductase</fullName>
        <shortName evidence="1">AGPR</shortName>
        <ecNumber evidence="1">1.2.1.38</ecNumber>
    </recommendedName>
    <alternativeName>
        <fullName evidence="1">N-acetyl-glutamate semialdehyde dehydrogenase</fullName>
        <shortName evidence="1">NAGSA dehydrogenase</shortName>
    </alternativeName>
</protein>
<dbReference type="EC" id="1.2.1.38" evidence="1"/>
<dbReference type="EMBL" id="CP000103">
    <property type="protein sequence ID" value="ABB73867.1"/>
    <property type="molecule type" value="Genomic_DNA"/>
</dbReference>
<dbReference type="RefSeq" id="WP_011379921.1">
    <property type="nucleotide sequence ID" value="NC_007614.1"/>
</dbReference>
<dbReference type="SMR" id="Q2YBK4"/>
<dbReference type="STRING" id="323848.Nmul_A0559"/>
<dbReference type="KEGG" id="nmu:Nmul_A0559"/>
<dbReference type="eggNOG" id="COG0002">
    <property type="taxonomic scope" value="Bacteria"/>
</dbReference>
<dbReference type="HOGENOM" id="CLU_006384_0_1_4"/>
<dbReference type="OrthoDB" id="9801289at2"/>
<dbReference type="UniPathway" id="UPA00068">
    <property type="reaction ID" value="UER00108"/>
</dbReference>
<dbReference type="Proteomes" id="UP000002718">
    <property type="component" value="Chromosome"/>
</dbReference>
<dbReference type="GO" id="GO:0005737">
    <property type="term" value="C:cytoplasm"/>
    <property type="evidence" value="ECO:0007669"/>
    <property type="project" value="UniProtKB-SubCell"/>
</dbReference>
<dbReference type="GO" id="GO:0003942">
    <property type="term" value="F:N-acetyl-gamma-glutamyl-phosphate reductase activity"/>
    <property type="evidence" value="ECO:0007669"/>
    <property type="project" value="UniProtKB-UniRule"/>
</dbReference>
<dbReference type="GO" id="GO:0051287">
    <property type="term" value="F:NAD binding"/>
    <property type="evidence" value="ECO:0007669"/>
    <property type="project" value="InterPro"/>
</dbReference>
<dbReference type="GO" id="GO:0070401">
    <property type="term" value="F:NADP+ binding"/>
    <property type="evidence" value="ECO:0007669"/>
    <property type="project" value="InterPro"/>
</dbReference>
<dbReference type="GO" id="GO:0006526">
    <property type="term" value="P:L-arginine biosynthetic process"/>
    <property type="evidence" value="ECO:0007669"/>
    <property type="project" value="UniProtKB-UniRule"/>
</dbReference>
<dbReference type="CDD" id="cd23934">
    <property type="entry name" value="AGPR_1_C"/>
    <property type="match status" value="1"/>
</dbReference>
<dbReference type="CDD" id="cd17895">
    <property type="entry name" value="AGPR_1_N"/>
    <property type="match status" value="1"/>
</dbReference>
<dbReference type="FunFam" id="3.30.360.10:FF:000014">
    <property type="entry name" value="N-acetyl-gamma-glutamyl-phosphate reductase"/>
    <property type="match status" value="1"/>
</dbReference>
<dbReference type="Gene3D" id="3.30.360.10">
    <property type="entry name" value="Dihydrodipicolinate Reductase, domain 2"/>
    <property type="match status" value="1"/>
</dbReference>
<dbReference type="Gene3D" id="3.40.50.720">
    <property type="entry name" value="NAD(P)-binding Rossmann-like Domain"/>
    <property type="match status" value="1"/>
</dbReference>
<dbReference type="HAMAP" id="MF_00150">
    <property type="entry name" value="ArgC_type1"/>
    <property type="match status" value="1"/>
</dbReference>
<dbReference type="InterPro" id="IPR023013">
    <property type="entry name" value="AGPR_AS"/>
</dbReference>
<dbReference type="InterPro" id="IPR000706">
    <property type="entry name" value="AGPR_type-1"/>
</dbReference>
<dbReference type="InterPro" id="IPR036291">
    <property type="entry name" value="NAD(P)-bd_dom_sf"/>
</dbReference>
<dbReference type="InterPro" id="IPR050085">
    <property type="entry name" value="NAGSA_dehydrogenase"/>
</dbReference>
<dbReference type="InterPro" id="IPR000534">
    <property type="entry name" value="Semialdehyde_DH_NAD-bd"/>
</dbReference>
<dbReference type="NCBIfam" id="TIGR01850">
    <property type="entry name" value="argC"/>
    <property type="match status" value="1"/>
</dbReference>
<dbReference type="PANTHER" id="PTHR32338:SF10">
    <property type="entry name" value="N-ACETYL-GAMMA-GLUTAMYL-PHOSPHATE REDUCTASE, CHLOROPLASTIC-RELATED"/>
    <property type="match status" value="1"/>
</dbReference>
<dbReference type="PANTHER" id="PTHR32338">
    <property type="entry name" value="N-ACETYL-GAMMA-GLUTAMYL-PHOSPHATE REDUCTASE, CHLOROPLASTIC-RELATED-RELATED"/>
    <property type="match status" value="1"/>
</dbReference>
<dbReference type="Pfam" id="PF01118">
    <property type="entry name" value="Semialdhyde_dh"/>
    <property type="match status" value="1"/>
</dbReference>
<dbReference type="Pfam" id="PF22698">
    <property type="entry name" value="Semialdhyde_dhC_1"/>
    <property type="match status" value="1"/>
</dbReference>
<dbReference type="SMART" id="SM00859">
    <property type="entry name" value="Semialdhyde_dh"/>
    <property type="match status" value="1"/>
</dbReference>
<dbReference type="SUPFAM" id="SSF55347">
    <property type="entry name" value="Glyceraldehyde-3-phosphate dehydrogenase-like, C-terminal domain"/>
    <property type="match status" value="1"/>
</dbReference>
<dbReference type="SUPFAM" id="SSF51735">
    <property type="entry name" value="NAD(P)-binding Rossmann-fold domains"/>
    <property type="match status" value="1"/>
</dbReference>
<dbReference type="PROSITE" id="PS01224">
    <property type="entry name" value="ARGC"/>
    <property type="match status" value="1"/>
</dbReference>
<reference key="1">
    <citation type="submission" date="2005-08" db="EMBL/GenBank/DDBJ databases">
        <title>Complete sequence of chromosome 1 of Nitrosospira multiformis ATCC 25196.</title>
        <authorList>
            <person name="Copeland A."/>
            <person name="Lucas S."/>
            <person name="Lapidus A."/>
            <person name="Barry K."/>
            <person name="Detter J.C."/>
            <person name="Glavina T."/>
            <person name="Hammon N."/>
            <person name="Israni S."/>
            <person name="Pitluck S."/>
            <person name="Chain P."/>
            <person name="Malfatti S."/>
            <person name="Shin M."/>
            <person name="Vergez L."/>
            <person name="Schmutz J."/>
            <person name="Larimer F."/>
            <person name="Land M."/>
            <person name="Hauser L."/>
            <person name="Kyrpides N."/>
            <person name="Lykidis A."/>
            <person name="Richardson P."/>
        </authorList>
    </citation>
    <scope>NUCLEOTIDE SEQUENCE [LARGE SCALE GENOMIC DNA]</scope>
    <source>
        <strain>ATCC 25196 / NCIMB 11849 / C 71</strain>
    </source>
</reference>
<accession>Q2YBK4</accession>